<keyword id="KW-0010">Activator</keyword>
<keyword id="KW-0963">Cytoplasm</keyword>
<keyword id="KW-0238">DNA-binding</keyword>
<keyword id="KW-0276">Fatty acid metabolism</keyword>
<keyword id="KW-0443">Lipid metabolism</keyword>
<keyword id="KW-1185">Reference proteome</keyword>
<keyword id="KW-0678">Repressor</keyword>
<keyword id="KW-0804">Transcription</keyword>
<keyword id="KW-0805">Transcription regulation</keyword>
<feature type="chain" id="PRO_1000132332" description="Fatty acid metabolism regulator protein">
    <location>
        <begin position="1"/>
        <end position="239"/>
    </location>
</feature>
<feature type="domain" description="HTH gntR-type" evidence="1">
    <location>
        <begin position="6"/>
        <end position="74"/>
    </location>
</feature>
<feature type="DNA-binding region" description="H-T-H motif" evidence="1">
    <location>
        <begin position="34"/>
        <end position="53"/>
    </location>
</feature>
<reference key="1">
    <citation type="submission" date="2008-05" db="EMBL/GenBank/DDBJ databases">
        <title>Complete sequence of Shigella boydii serotype 18 strain BS512.</title>
        <authorList>
            <person name="Rasko D.A."/>
            <person name="Rosovitz M."/>
            <person name="Maurelli A.T."/>
            <person name="Myers G."/>
            <person name="Seshadri R."/>
            <person name="Cer R."/>
            <person name="Jiang L."/>
            <person name="Ravel J."/>
            <person name="Sebastian Y."/>
        </authorList>
    </citation>
    <scope>NUCLEOTIDE SEQUENCE [LARGE SCALE GENOMIC DNA]</scope>
    <source>
        <strain>CDC 3083-94 / BS512</strain>
    </source>
</reference>
<comment type="function">
    <text evidence="1">Multifunctional regulator of fatty acid metabolism.</text>
</comment>
<comment type="subunit">
    <text evidence="1">Homodimer.</text>
</comment>
<comment type="subcellular location">
    <subcellularLocation>
        <location evidence="1">Cytoplasm</location>
    </subcellularLocation>
</comment>
<sequence length="239" mass="26969">MVIKAQSPAGFAEEYIIESIWNNRFPPGTILPAERELSELIGVTRTTLREVLQRLARDGWLTIQHGKPTKVNNFWETSGLNILETLARLDHESVPQLIDNLLSVRTNISTIFIRTAFRQHPDKAQEVLATANEVADHADAFAELDYNIFRGLAFASGNPIYGLILNGMKGLYTRIGRHYFANPEARSLALGFYHKLSALCSEGAHDQVYETVRRYGHESGEIWHRMQKNLPGDLAIQGR</sequence>
<proteinExistence type="inferred from homology"/>
<protein>
    <recommendedName>
        <fullName evidence="1">Fatty acid metabolism regulator protein</fullName>
    </recommendedName>
</protein>
<accession>B2TZB3</accession>
<name>FADR_SHIB3</name>
<gene>
    <name evidence="1" type="primary">fadR</name>
    <name type="ordered locus">SbBS512_E1345</name>
</gene>
<organism>
    <name type="scientific">Shigella boydii serotype 18 (strain CDC 3083-94 / BS512)</name>
    <dbReference type="NCBI Taxonomy" id="344609"/>
    <lineage>
        <taxon>Bacteria</taxon>
        <taxon>Pseudomonadati</taxon>
        <taxon>Pseudomonadota</taxon>
        <taxon>Gammaproteobacteria</taxon>
        <taxon>Enterobacterales</taxon>
        <taxon>Enterobacteriaceae</taxon>
        <taxon>Shigella</taxon>
    </lineage>
</organism>
<dbReference type="EMBL" id="CP001063">
    <property type="protein sequence ID" value="ACD10456.1"/>
    <property type="molecule type" value="Genomic_DNA"/>
</dbReference>
<dbReference type="RefSeq" id="WP_000234823.1">
    <property type="nucleotide sequence ID" value="NC_010658.1"/>
</dbReference>
<dbReference type="SMR" id="B2TZB3"/>
<dbReference type="STRING" id="344609.SbBS512_E1345"/>
<dbReference type="GeneID" id="93776245"/>
<dbReference type="KEGG" id="sbc:SbBS512_E1345"/>
<dbReference type="HOGENOM" id="CLU_017584_9_4_6"/>
<dbReference type="Proteomes" id="UP000001030">
    <property type="component" value="Chromosome"/>
</dbReference>
<dbReference type="GO" id="GO:0005737">
    <property type="term" value="C:cytoplasm"/>
    <property type="evidence" value="ECO:0007669"/>
    <property type="project" value="UniProtKB-SubCell"/>
</dbReference>
<dbReference type="GO" id="GO:0003677">
    <property type="term" value="F:DNA binding"/>
    <property type="evidence" value="ECO:0007669"/>
    <property type="project" value="UniProtKB-KW"/>
</dbReference>
<dbReference type="GO" id="GO:0003700">
    <property type="term" value="F:DNA-binding transcription factor activity"/>
    <property type="evidence" value="ECO:0007669"/>
    <property type="project" value="UniProtKB-UniRule"/>
</dbReference>
<dbReference type="GO" id="GO:0000062">
    <property type="term" value="F:fatty-acyl-CoA binding"/>
    <property type="evidence" value="ECO:0007669"/>
    <property type="project" value="InterPro"/>
</dbReference>
<dbReference type="GO" id="GO:0006631">
    <property type="term" value="P:fatty acid metabolic process"/>
    <property type="evidence" value="ECO:0007669"/>
    <property type="project" value="UniProtKB-KW"/>
</dbReference>
<dbReference type="GO" id="GO:0019217">
    <property type="term" value="P:regulation of fatty acid metabolic process"/>
    <property type="evidence" value="ECO:0007669"/>
    <property type="project" value="UniProtKB-UniRule"/>
</dbReference>
<dbReference type="CDD" id="cd07377">
    <property type="entry name" value="WHTH_GntR"/>
    <property type="match status" value="1"/>
</dbReference>
<dbReference type="FunFam" id="1.10.10.10:FF:000036">
    <property type="entry name" value="Fatty acid metabolism regulator protein"/>
    <property type="match status" value="1"/>
</dbReference>
<dbReference type="FunFam" id="1.20.120.530:FF:000003">
    <property type="entry name" value="Fatty acid metabolism regulator protein"/>
    <property type="match status" value="1"/>
</dbReference>
<dbReference type="Gene3D" id="1.20.120.530">
    <property type="entry name" value="GntR ligand-binding domain-like"/>
    <property type="match status" value="1"/>
</dbReference>
<dbReference type="Gene3D" id="1.10.10.10">
    <property type="entry name" value="Winged helix-like DNA-binding domain superfamily/Winged helix DNA-binding domain"/>
    <property type="match status" value="1"/>
</dbReference>
<dbReference type="HAMAP" id="MF_00696">
    <property type="entry name" value="HTH_FadR"/>
    <property type="match status" value="1"/>
</dbReference>
<dbReference type="InterPro" id="IPR014178">
    <property type="entry name" value="FA-response_TF_FadR"/>
</dbReference>
<dbReference type="InterPro" id="IPR028374">
    <property type="entry name" value="FadR_C"/>
</dbReference>
<dbReference type="InterPro" id="IPR008920">
    <property type="entry name" value="TF_FadR/GntR_C"/>
</dbReference>
<dbReference type="InterPro" id="IPR000524">
    <property type="entry name" value="Tscrpt_reg_HTH_GntR"/>
</dbReference>
<dbReference type="InterPro" id="IPR036388">
    <property type="entry name" value="WH-like_DNA-bd_sf"/>
</dbReference>
<dbReference type="InterPro" id="IPR036390">
    <property type="entry name" value="WH_DNA-bd_sf"/>
</dbReference>
<dbReference type="NCBIfam" id="TIGR02812">
    <property type="entry name" value="fadR_gamma"/>
    <property type="match status" value="1"/>
</dbReference>
<dbReference type="NCBIfam" id="NF003444">
    <property type="entry name" value="PRK04984.1"/>
    <property type="match status" value="1"/>
</dbReference>
<dbReference type="PANTHER" id="PTHR43537:SF52">
    <property type="entry name" value="FATTY ACID METABOLISM REGULATOR PROTEIN"/>
    <property type="match status" value="1"/>
</dbReference>
<dbReference type="PANTHER" id="PTHR43537">
    <property type="entry name" value="TRANSCRIPTIONAL REGULATOR, GNTR FAMILY"/>
    <property type="match status" value="1"/>
</dbReference>
<dbReference type="Pfam" id="PF07840">
    <property type="entry name" value="FadR_C"/>
    <property type="match status" value="1"/>
</dbReference>
<dbReference type="Pfam" id="PF00392">
    <property type="entry name" value="GntR"/>
    <property type="match status" value="1"/>
</dbReference>
<dbReference type="PRINTS" id="PR00035">
    <property type="entry name" value="HTHGNTR"/>
</dbReference>
<dbReference type="SMART" id="SM00345">
    <property type="entry name" value="HTH_GNTR"/>
    <property type="match status" value="1"/>
</dbReference>
<dbReference type="SUPFAM" id="SSF48008">
    <property type="entry name" value="GntR ligand-binding domain-like"/>
    <property type="match status" value="1"/>
</dbReference>
<dbReference type="SUPFAM" id="SSF46785">
    <property type="entry name" value="Winged helix' DNA-binding domain"/>
    <property type="match status" value="1"/>
</dbReference>
<dbReference type="PROSITE" id="PS50949">
    <property type="entry name" value="HTH_GNTR"/>
    <property type="match status" value="1"/>
</dbReference>
<evidence type="ECO:0000255" key="1">
    <source>
        <dbReference type="HAMAP-Rule" id="MF_00696"/>
    </source>
</evidence>